<name>TBA8_RAT</name>
<feature type="chain" id="PRO_0000048130" description="Tubulin alpha-8 chain">
    <location>
        <begin position="1"/>
        <end position="449"/>
    </location>
</feature>
<feature type="chain" id="PRO_0000456436" description="Dephenylalaninated tubulin alpha-8 chain" evidence="4">
    <location>
        <begin position="1"/>
        <end position="448"/>
    </location>
</feature>
<feature type="short sequence motif" description="MREC motif" evidence="1">
    <location>
        <begin position="1"/>
        <end position="4"/>
    </location>
</feature>
<feature type="active site" evidence="1">
    <location>
        <position position="254"/>
    </location>
</feature>
<feature type="binding site" evidence="1">
    <location>
        <position position="11"/>
    </location>
    <ligand>
        <name>GTP</name>
        <dbReference type="ChEBI" id="CHEBI:37565"/>
    </ligand>
</feature>
<feature type="binding site" evidence="1">
    <location>
        <position position="71"/>
    </location>
    <ligand>
        <name>GTP</name>
        <dbReference type="ChEBI" id="CHEBI:37565"/>
    </ligand>
</feature>
<feature type="binding site" evidence="1">
    <location>
        <position position="71"/>
    </location>
    <ligand>
        <name>Mg(2+)</name>
        <dbReference type="ChEBI" id="CHEBI:18420"/>
    </ligand>
</feature>
<feature type="binding site" evidence="1">
    <location>
        <position position="140"/>
    </location>
    <ligand>
        <name>GTP</name>
        <dbReference type="ChEBI" id="CHEBI:37565"/>
    </ligand>
</feature>
<feature type="binding site" evidence="1">
    <location>
        <position position="144"/>
    </location>
    <ligand>
        <name>GTP</name>
        <dbReference type="ChEBI" id="CHEBI:37565"/>
    </ligand>
</feature>
<feature type="binding site" evidence="1">
    <location>
        <position position="145"/>
    </location>
    <ligand>
        <name>GTP</name>
        <dbReference type="ChEBI" id="CHEBI:37565"/>
    </ligand>
</feature>
<feature type="binding site" evidence="1">
    <location>
        <position position="179"/>
    </location>
    <ligand>
        <name>GTP</name>
        <dbReference type="ChEBI" id="CHEBI:37565"/>
    </ligand>
</feature>
<feature type="binding site" evidence="1">
    <location>
        <position position="206"/>
    </location>
    <ligand>
        <name>GTP</name>
        <dbReference type="ChEBI" id="CHEBI:37565"/>
    </ligand>
</feature>
<feature type="binding site" evidence="1">
    <location>
        <position position="228"/>
    </location>
    <ligand>
        <name>GTP</name>
        <dbReference type="ChEBI" id="CHEBI:37565"/>
    </ligand>
</feature>
<comment type="function">
    <text>Tubulin is the major constituent of microtubules, a cylinder consisting of laterally associated linear protofilaments composed of alpha- and beta-tubulin heterodimers. Microtubules grow by the addition of GTP-tubulin dimers to the microtubule end, where a stabilizing cap forms. Below the cap, tubulin dimers are in GDP-bound state, owing to GTPase activity of alpha-tubulin.</text>
</comment>
<comment type="catalytic activity">
    <reaction evidence="1">
        <text>GTP + H2O = GDP + phosphate + H(+)</text>
        <dbReference type="Rhea" id="RHEA:19669"/>
        <dbReference type="ChEBI" id="CHEBI:15377"/>
        <dbReference type="ChEBI" id="CHEBI:15378"/>
        <dbReference type="ChEBI" id="CHEBI:37565"/>
        <dbReference type="ChEBI" id="CHEBI:43474"/>
        <dbReference type="ChEBI" id="CHEBI:58189"/>
    </reaction>
    <physiologicalReaction direction="left-to-right" evidence="1">
        <dbReference type="Rhea" id="RHEA:19670"/>
    </physiologicalReaction>
</comment>
<comment type="cofactor">
    <cofactor evidence="1">
        <name>Mg(2+)</name>
        <dbReference type="ChEBI" id="CHEBI:18420"/>
    </cofactor>
</comment>
<comment type="subunit">
    <text>Dimer of alpha and beta chains. A typical microtubule is a hollow water-filled tube with an outer diameter of 25 nm and an inner diameter of 15 nM. Alpha-beta heterodimers associate head-to-tail to form protofilaments running lengthwise along the microtubule wall with the beta-tubulin subunit facing the microtubule plus end conferring a structural polarity. Microtubules usually have 13 protofilaments but different protofilament numbers can be found in some organisms and specialized cells.</text>
</comment>
<comment type="subcellular location">
    <subcellularLocation>
        <location>Cytoplasm</location>
        <location>Cytoskeleton</location>
    </subcellularLocation>
</comment>
<comment type="domain">
    <text evidence="1">The MREC motif may be critical for tubulin autoregulation.</text>
</comment>
<comment type="PTM">
    <text evidence="3">Some glutamate residues at the C-terminus are polyglycylated, resulting in polyglycine chains on the gamma-carboxyl group. Glycylation is mainly limited to tubulin incorporated into axonemes (cilia and flagella) whereas glutamylation is prevalent in neuronal cells, centrioles, axonemes, and the mitotic spindle. Both modifications can coexist on the same protein on adjacent residues, and lowering polyglycylation levels increases polyglutamylation, and reciprocally. Cilia and flagella glycylation is required for their stability and maintenance. Flagella glycylation controls sperm motility.</text>
</comment>
<comment type="PTM">
    <text evidence="2 3">Some glutamate residues at the C-terminus are polyglutamylated, resulting in polyglutamate chains on the gamma-carboxyl group (By similarity). Polyglutamylation plays a key role in microtubule severing by spastin (SPAST). SPAST preferentially recognizes and acts on microtubules decorated with short polyglutamate tails: severing activity by SPAST increases as the number of glutamates per tubulin rises from one to eight, but decreases beyond this glutamylation threshold (By similarity). Glutamylation is also involved in cilia motility (By similarity).</text>
</comment>
<comment type="PTM">
    <text evidence="4">The C-terminal phenylalanine residue is cleaved by MATCAP1/KIAA0895L.</text>
</comment>
<comment type="miscellaneous">
    <text evidence="4">This tubulin does not have a C-terminal tyrosine; however, its C-terminal phenylalanine residue can be cleaved.</text>
</comment>
<comment type="similarity">
    <text evidence="5">Belongs to the tubulin family.</text>
</comment>
<proteinExistence type="evidence at transcript level"/>
<keyword id="KW-0963">Cytoplasm</keyword>
<keyword id="KW-0206">Cytoskeleton</keyword>
<keyword id="KW-0342">GTP-binding</keyword>
<keyword id="KW-0378">Hydrolase</keyword>
<keyword id="KW-0460">Magnesium</keyword>
<keyword id="KW-0479">Metal-binding</keyword>
<keyword id="KW-0493">Microtubule</keyword>
<keyword id="KW-0547">Nucleotide-binding</keyword>
<keyword id="KW-1185">Reference proteome</keyword>
<organism>
    <name type="scientific">Rattus norvegicus</name>
    <name type="common">Rat</name>
    <dbReference type="NCBI Taxonomy" id="10116"/>
    <lineage>
        <taxon>Eukaryota</taxon>
        <taxon>Metazoa</taxon>
        <taxon>Chordata</taxon>
        <taxon>Craniata</taxon>
        <taxon>Vertebrata</taxon>
        <taxon>Euteleostomi</taxon>
        <taxon>Mammalia</taxon>
        <taxon>Eutheria</taxon>
        <taxon>Euarchontoglires</taxon>
        <taxon>Glires</taxon>
        <taxon>Rodentia</taxon>
        <taxon>Myomorpha</taxon>
        <taxon>Muroidea</taxon>
        <taxon>Muridae</taxon>
        <taxon>Murinae</taxon>
        <taxon>Rattus</taxon>
    </lineage>
</organism>
<reference key="1">
    <citation type="journal article" date="2004" name="Genome Res.">
        <title>The status, quality, and expansion of the NIH full-length cDNA project: the Mammalian Gene Collection (MGC).</title>
        <authorList>
            <consortium name="The MGC Project Team"/>
        </authorList>
    </citation>
    <scope>NUCLEOTIDE SEQUENCE [LARGE SCALE MRNA]</scope>
    <source>
        <tissue>Testis</tissue>
    </source>
</reference>
<dbReference type="EC" id="3.6.5.-" evidence="1"/>
<dbReference type="EMBL" id="BC079185">
    <property type="protein sequence ID" value="AAH79185.1"/>
    <property type="molecule type" value="mRNA"/>
</dbReference>
<dbReference type="RefSeq" id="NP_001019510.1">
    <property type="nucleotide sequence ID" value="NM_001024339.1"/>
</dbReference>
<dbReference type="SMR" id="Q6AY56"/>
<dbReference type="BioGRID" id="271685">
    <property type="interactions" value="1"/>
</dbReference>
<dbReference type="FunCoup" id="Q6AY56">
    <property type="interactions" value="652"/>
</dbReference>
<dbReference type="IntAct" id="Q6AY56">
    <property type="interactions" value="2"/>
</dbReference>
<dbReference type="MINT" id="Q6AY56"/>
<dbReference type="STRING" id="10116.ENSRNOP00000065108"/>
<dbReference type="iPTMnet" id="Q6AY56"/>
<dbReference type="PhosphoSitePlus" id="Q6AY56"/>
<dbReference type="jPOST" id="Q6AY56"/>
<dbReference type="PaxDb" id="10116-ENSRNOP00000065108"/>
<dbReference type="Ensembl" id="ENSRNOT00000074096.3">
    <property type="protein sequence ID" value="ENSRNOP00000065108.1"/>
    <property type="gene ID" value="ENSRNOG00000048169.3"/>
</dbReference>
<dbReference type="GeneID" id="500377"/>
<dbReference type="KEGG" id="rno:500377"/>
<dbReference type="AGR" id="RGD:1566041"/>
<dbReference type="CTD" id="51807"/>
<dbReference type="RGD" id="1566041">
    <property type="gene designation" value="Tuba8"/>
</dbReference>
<dbReference type="eggNOG" id="KOG1376">
    <property type="taxonomic scope" value="Eukaryota"/>
</dbReference>
<dbReference type="GeneTree" id="ENSGT00940000159668"/>
<dbReference type="HOGENOM" id="CLU_015718_0_0_1"/>
<dbReference type="InParanoid" id="Q6AY56"/>
<dbReference type="PhylomeDB" id="Q6AY56"/>
<dbReference type="Reactome" id="R-RNO-190840">
    <property type="pathway name" value="Microtubule-dependent trafficking of connexons from Golgi to the plasma membrane"/>
</dbReference>
<dbReference type="Reactome" id="R-RNO-2132295">
    <property type="pathway name" value="MHC class II antigen presentation"/>
</dbReference>
<dbReference type="Reactome" id="R-RNO-2467813">
    <property type="pathway name" value="Separation of Sister Chromatids"/>
</dbReference>
<dbReference type="Reactome" id="R-RNO-2500257">
    <property type="pathway name" value="Resolution of Sister Chromatid Cohesion"/>
</dbReference>
<dbReference type="Reactome" id="R-RNO-3371497">
    <property type="pathway name" value="HSP90 chaperone cycle for steroid hormone receptors (SHR) in the presence of ligand"/>
</dbReference>
<dbReference type="Reactome" id="R-RNO-380320">
    <property type="pathway name" value="Recruitment of NuMA to mitotic centrosomes"/>
</dbReference>
<dbReference type="Reactome" id="R-RNO-437239">
    <property type="pathway name" value="Recycling pathway of L1"/>
</dbReference>
<dbReference type="Reactome" id="R-RNO-5617833">
    <property type="pathway name" value="Cilium Assembly"/>
</dbReference>
<dbReference type="Reactome" id="R-RNO-5626467">
    <property type="pathway name" value="RHO GTPases activate IQGAPs"/>
</dbReference>
<dbReference type="Reactome" id="R-RNO-5663220">
    <property type="pathway name" value="RHO GTPases Activate Formins"/>
</dbReference>
<dbReference type="Reactome" id="R-RNO-6807878">
    <property type="pathway name" value="COPI-mediated anterograde transport"/>
</dbReference>
<dbReference type="Reactome" id="R-RNO-6811434">
    <property type="pathway name" value="COPI-dependent Golgi-to-ER retrograde traffic"/>
</dbReference>
<dbReference type="Reactome" id="R-RNO-6811436">
    <property type="pathway name" value="COPI-independent Golgi-to-ER retrograde traffic"/>
</dbReference>
<dbReference type="Reactome" id="R-RNO-68877">
    <property type="pathway name" value="Mitotic Prometaphase"/>
</dbReference>
<dbReference type="Reactome" id="R-RNO-8852276">
    <property type="pathway name" value="The role of GTSE1 in G2/M progression after G2 checkpoint"/>
</dbReference>
<dbReference type="Reactome" id="R-RNO-8955332">
    <property type="pathway name" value="Carboxyterminal post-translational modifications of tubulin"/>
</dbReference>
<dbReference type="Reactome" id="R-RNO-9646399">
    <property type="pathway name" value="Aggrephagy"/>
</dbReference>
<dbReference type="Reactome" id="R-RNO-9648025">
    <property type="pathway name" value="EML4 and NUDC in mitotic spindle formation"/>
</dbReference>
<dbReference type="Reactome" id="R-RNO-9668328">
    <property type="pathway name" value="Sealing of the nuclear envelope (NE) by ESCRT-III"/>
</dbReference>
<dbReference type="Reactome" id="R-RNO-983189">
    <property type="pathway name" value="Kinesins"/>
</dbReference>
<dbReference type="Reactome" id="R-RNO-9833482">
    <property type="pathway name" value="PKR-mediated signaling"/>
</dbReference>
<dbReference type="PRO" id="PR:Q6AY56"/>
<dbReference type="Proteomes" id="UP000002494">
    <property type="component" value="Chromosome 4"/>
</dbReference>
<dbReference type="Bgee" id="ENSRNOG00000048169">
    <property type="expression patterns" value="Expressed in skeletal muscle tissue and 15 other cell types or tissues"/>
</dbReference>
<dbReference type="GO" id="GO:0001669">
    <property type="term" value="C:acrosomal vesicle"/>
    <property type="evidence" value="ECO:0000266"/>
    <property type="project" value="RGD"/>
</dbReference>
<dbReference type="GO" id="GO:0005737">
    <property type="term" value="C:cytoplasm"/>
    <property type="evidence" value="ECO:0000266"/>
    <property type="project" value="RGD"/>
</dbReference>
<dbReference type="GO" id="GO:0005874">
    <property type="term" value="C:microtubule"/>
    <property type="evidence" value="ECO:0000318"/>
    <property type="project" value="GO_Central"/>
</dbReference>
<dbReference type="GO" id="GO:0005525">
    <property type="term" value="F:GTP binding"/>
    <property type="evidence" value="ECO:0000318"/>
    <property type="project" value="GO_Central"/>
</dbReference>
<dbReference type="GO" id="GO:0016787">
    <property type="term" value="F:hydrolase activity"/>
    <property type="evidence" value="ECO:0007669"/>
    <property type="project" value="UniProtKB-KW"/>
</dbReference>
<dbReference type="GO" id="GO:0046872">
    <property type="term" value="F:metal ion binding"/>
    <property type="evidence" value="ECO:0007669"/>
    <property type="project" value="UniProtKB-KW"/>
</dbReference>
<dbReference type="GO" id="GO:0005200">
    <property type="term" value="F:structural constituent of cytoskeleton"/>
    <property type="evidence" value="ECO:0000318"/>
    <property type="project" value="GO_Central"/>
</dbReference>
<dbReference type="GO" id="GO:0000226">
    <property type="term" value="P:microtubule cytoskeleton organization"/>
    <property type="evidence" value="ECO:0000318"/>
    <property type="project" value="GO_Central"/>
</dbReference>
<dbReference type="GO" id="GO:0000278">
    <property type="term" value="P:mitotic cell cycle"/>
    <property type="evidence" value="ECO:0000318"/>
    <property type="project" value="GO_Central"/>
</dbReference>
<dbReference type="GO" id="GO:0007286">
    <property type="term" value="P:spermatid development"/>
    <property type="evidence" value="ECO:0000266"/>
    <property type="project" value="RGD"/>
</dbReference>
<dbReference type="GO" id="GO:0007283">
    <property type="term" value="P:spermatogenesis"/>
    <property type="evidence" value="ECO:0000266"/>
    <property type="project" value="RGD"/>
</dbReference>
<dbReference type="CDD" id="cd02186">
    <property type="entry name" value="alpha_tubulin"/>
    <property type="match status" value="1"/>
</dbReference>
<dbReference type="FunFam" id="1.10.287.600:FF:000005">
    <property type="entry name" value="Tubulin alpha chain"/>
    <property type="match status" value="1"/>
</dbReference>
<dbReference type="FunFam" id="3.30.1330.20:FF:000001">
    <property type="entry name" value="Tubulin alpha chain"/>
    <property type="match status" value="1"/>
</dbReference>
<dbReference type="FunFam" id="3.40.50.1440:FF:000002">
    <property type="entry name" value="Tubulin alpha chain"/>
    <property type="match status" value="1"/>
</dbReference>
<dbReference type="Gene3D" id="1.10.287.600">
    <property type="entry name" value="Helix hairpin bin"/>
    <property type="match status" value="1"/>
</dbReference>
<dbReference type="Gene3D" id="3.30.1330.20">
    <property type="entry name" value="Tubulin/FtsZ, C-terminal domain"/>
    <property type="match status" value="1"/>
</dbReference>
<dbReference type="Gene3D" id="3.40.50.1440">
    <property type="entry name" value="Tubulin/FtsZ, GTPase domain"/>
    <property type="match status" value="1"/>
</dbReference>
<dbReference type="InterPro" id="IPR002452">
    <property type="entry name" value="Alpha_tubulin"/>
</dbReference>
<dbReference type="InterPro" id="IPR008280">
    <property type="entry name" value="Tub_FtsZ_C"/>
</dbReference>
<dbReference type="InterPro" id="IPR000217">
    <property type="entry name" value="Tubulin"/>
</dbReference>
<dbReference type="InterPro" id="IPR037103">
    <property type="entry name" value="Tubulin/FtsZ-like_C"/>
</dbReference>
<dbReference type="InterPro" id="IPR018316">
    <property type="entry name" value="Tubulin/FtsZ_2-layer-sand-dom"/>
</dbReference>
<dbReference type="InterPro" id="IPR036525">
    <property type="entry name" value="Tubulin/FtsZ_GTPase_sf"/>
</dbReference>
<dbReference type="InterPro" id="IPR023123">
    <property type="entry name" value="Tubulin_C"/>
</dbReference>
<dbReference type="InterPro" id="IPR017975">
    <property type="entry name" value="Tubulin_CS"/>
</dbReference>
<dbReference type="InterPro" id="IPR003008">
    <property type="entry name" value="Tubulin_FtsZ_GTPase"/>
</dbReference>
<dbReference type="PANTHER" id="PTHR11588">
    <property type="entry name" value="TUBULIN"/>
    <property type="match status" value="1"/>
</dbReference>
<dbReference type="Pfam" id="PF00091">
    <property type="entry name" value="Tubulin"/>
    <property type="match status" value="1"/>
</dbReference>
<dbReference type="Pfam" id="PF03953">
    <property type="entry name" value="Tubulin_C"/>
    <property type="match status" value="1"/>
</dbReference>
<dbReference type="PRINTS" id="PR01162">
    <property type="entry name" value="ALPHATUBULIN"/>
</dbReference>
<dbReference type="PRINTS" id="PR01161">
    <property type="entry name" value="TUBULIN"/>
</dbReference>
<dbReference type="SMART" id="SM00864">
    <property type="entry name" value="Tubulin"/>
    <property type="match status" value="1"/>
</dbReference>
<dbReference type="SMART" id="SM00865">
    <property type="entry name" value="Tubulin_C"/>
    <property type="match status" value="1"/>
</dbReference>
<dbReference type="SUPFAM" id="SSF55307">
    <property type="entry name" value="Tubulin C-terminal domain-like"/>
    <property type="match status" value="1"/>
</dbReference>
<dbReference type="SUPFAM" id="SSF52490">
    <property type="entry name" value="Tubulin nucleotide-binding domain-like"/>
    <property type="match status" value="1"/>
</dbReference>
<dbReference type="PROSITE" id="PS00227">
    <property type="entry name" value="TUBULIN"/>
    <property type="match status" value="1"/>
</dbReference>
<evidence type="ECO:0000250" key="1">
    <source>
        <dbReference type="UniProtKB" id="P68363"/>
    </source>
</evidence>
<evidence type="ECO:0000250" key="2">
    <source>
        <dbReference type="UniProtKB" id="Q71U36"/>
    </source>
</evidence>
<evidence type="ECO:0000250" key="3">
    <source>
        <dbReference type="UniProtKB" id="Q9JJZ2"/>
    </source>
</evidence>
<evidence type="ECO:0000250" key="4">
    <source>
        <dbReference type="UniProtKB" id="Q9NY65"/>
    </source>
</evidence>
<evidence type="ECO:0000305" key="5"/>
<sequence length="449" mass="50037">MRECISVHVGQAGVQIGNACWELFCLEHGIQADGTFGTQASKINDDDSFTTFFSETGNGKHVPRAVMVDLEPTVVDEVRAGTYRQLFHPEQLITGKEDAANNYARGHYTVGKESIDLVLDRIRKLTDACSGLQGFLIFHSFGGGTGSGFTSLLMERLSLDYGKKSKLEFAIYPAPQVSTAVVEPYNSILTTHTTLEHSDCAFMVDNEAIYDICRRNLDIERPTYTNLNRLISQIVSSITASLRFDGALNVDLTEFQTNLVPYPRIHFPLVTYAPIVSAEKAYHEQLSVAEITSSCFEPNSQMVKCDPRHGKYMACCMLYRGDVVPKDVNVAIAAIKTKRTIQFVDWCPTGFKVGINYQPPTVVPGGDLAKVQRAVCMLSNTTAIAEAWARLDHKFDLMYAKRAFVHWYVGEGMEEGEFSEAREDLAALEKDYEEVGTDSFEEENEGEEF</sequence>
<protein>
    <recommendedName>
        <fullName>Tubulin alpha-8 chain</fullName>
        <ecNumber evidence="1">3.6.5.-</ecNumber>
    </recommendedName>
    <alternativeName>
        <fullName>Alpha-tubulin 8</fullName>
    </alternativeName>
    <component>
        <recommendedName>
            <fullName>Dephenylalaninated tubulin alpha-8 chain</fullName>
        </recommendedName>
    </component>
</protein>
<accession>Q6AY56</accession>
<gene>
    <name type="primary">Tuba8</name>
</gene>